<dbReference type="EMBL" id="AB211065">
    <property type="protein sequence ID" value="BAD95492.1"/>
    <property type="molecule type" value="mRNA"/>
</dbReference>
<dbReference type="EMBL" id="AK001746">
    <property type="protein sequence ID" value="BAA91878.1"/>
    <property type="status" value="ALT_SEQ"/>
    <property type="molecule type" value="mRNA"/>
</dbReference>
<dbReference type="EMBL" id="AK001973">
    <property type="protein sequence ID" value="BAA92011.1"/>
    <property type="molecule type" value="mRNA"/>
</dbReference>
<dbReference type="EMBL" id="AL834314">
    <property type="protein sequence ID" value="CAD38984.1"/>
    <property type="molecule type" value="mRNA"/>
</dbReference>
<dbReference type="EMBL" id="AL162739">
    <property type="status" value="NOT_ANNOTATED_CDS"/>
    <property type="molecule type" value="Genomic_DNA"/>
</dbReference>
<dbReference type="EMBL" id="BC111559">
    <property type="protein sequence ID" value="AAI11560.1"/>
    <property type="molecule type" value="mRNA"/>
</dbReference>
<dbReference type="CCDS" id="CCDS619.1"/>
<dbReference type="RefSeq" id="NP_001158307.1">
    <property type="nucleotide sequence ID" value="NM_001164835.2"/>
</dbReference>
<dbReference type="RefSeq" id="NP_061952.3">
    <property type="nucleotide sequence ID" value="NM_019079.4"/>
</dbReference>
<dbReference type="PDB" id="2LR6">
    <property type="method" value="NMR"/>
    <property type="chains" value="A/B=235-321"/>
</dbReference>
<dbReference type="PDB" id="3SOO">
    <property type="method" value="X-ray"/>
    <property type="resolution" value="2.73 A"/>
    <property type="chains" value="A/B/C=235-321"/>
</dbReference>
<dbReference type="PDBsum" id="2LR6"/>
<dbReference type="PDBsum" id="3SOO"/>
<dbReference type="SMR" id="Q5T7N2"/>
<dbReference type="BioGRID" id="120072">
    <property type="interactions" value="28"/>
</dbReference>
<dbReference type="FunCoup" id="Q5T7N2">
    <property type="interactions" value="37"/>
</dbReference>
<dbReference type="IntAct" id="Q5T7N2">
    <property type="interactions" value="328"/>
</dbReference>
<dbReference type="MINT" id="Q5T7N2"/>
<dbReference type="STRING" id="9606.ENSP00000419901"/>
<dbReference type="GlyGen" id="Q5T7N2">
    <property type="glycosylation" value="2 sites, 1 O-linked glycan (2 sites)"/>
</dbReference>
<dbReference type="iPTMnet" id="Q5T7N2"/>
<dbReference type="PhosphoSitePlus" id="Q5T7N2"/>
<dbReference type="BioMuta" id="L1TD1"/>
<dbReference type="DMDM" id="74745406"/>
<dbReference type="jPOST" id="Q5T7N2"/>
<dbReference type="MassIVE" id="Q5T7N2"/>
<dbReference type="PaxDb" id="9606-ENSP00000419901"/>
<dbReference type="PeptideAtlas" id="Q5T7N2"/>
<dbReference type="ProteomicsDB" id="64668"/>
<dbReference type="Antibodypedia" id="33329">
    <property type="antibodies" value="78 antibodies from 25 providers"/>
</dbReference>
<dbReference type="DNASU" id="54596"/>
<dbReference type="Ensembl" id="ENST00000498273.2">
    <property type="protein sequence ID" value="ENSP00000419901.1"/>
    <property type="gene ID" value="ENSG00000240563.3"/>
</dbReference>
<dbReference type="GeneID" id="54596"/>
<dbReference type="KEGG" id="hsa:54596"/>
<dbReference type="MANE-Select" id="ENST00000498273.2">
    <property type="protein sequence ID" value="ENSP00000419901.1"/>
    <property type="RefSeq nucleotide sequence ID" value="NM_019079.5"/>
    <property type="RefSeq protein sequence ID" value="NP_061952.3"/>
</dbReference>
<dbReference type="UCSC" id="uc001dae.6">
    <property type="organism name" value="human"/>
</dbReference>
<dbReference type="AGR" id="HGNC:25595"/>
<dbReference type="CTD" id="54596"/>
<dbReference type="DisGeNET" id="54596"/>
<dbReference type="GeneCards" id="L1TD1"/>
<dbReference type="HGNC" id="HGNC:25595">
    <property type="gene designation" value="L1TD1"/>
</dbReference>
<dbReference type="HPA" id="ENSG00000240563">
    <property type="expression patterns" value="Group enriched (intestine, lymphoid tissue, placenta, testis)"/>
</dbReference>
<dbReference type="neXtProt" id="NX_Q5T7N2"/>
<dbReference type="OpenTargets" id="ENSG00000240563"/>
<dbReference type="PharmGKB" id="PA145008170"/>
<dbReference type="VEuPathDB" id="HostDB:ENSG00000240563"/>
<dbReference type="eggNOG" id="ENOG502SRQ0">
    <property type="taxonomic scope" value="Eukaryota"/>
</dbReference>
<dbReference type="GeneTree" id="ENSGT01050000244818"/>
<dbReference type="HOGENOM" id="CLU_336140_0_0_1"/>
<dbReference type="InParanoid" id="Q5T7N2"/>
<dbReference type="OMA" id="KGFNPRI"/>
<dbReference type="OrthoDB" id="9537802at2759"/>
<dbReference type="PAN-GO" id="Q5T7N2">
    <property type="GO annotations" value="3 GO annotations based on evolutionary models"/>
</dbReference>
<dbReference type="PhylomeDB" id="Q5T7N2"/>
<dbReference type="TreeFam" id="TF351152"/>
<dbReference type="PathwayCommons" id="Q5T7N2"/>
<dbReference type="SignaLink" id="Q5T7N2"/>
<dbReference type="BioGRID-ORCS" id="54596">
    <property type="hits" value="15 hits in 1119 CRISPR screens"/>
</dbReference>
<dbReference type="CD-CODE" id="232F8A39">
    <property type="entry name" value="P-body"/>
</dbReference>
<dbReference type="CD-CODE" id="DEE660B4">
    <property type="entry name" value="Stress granule"/>
</dbReference>
<dbReference type="EvolutionaryTrace" id="Q5T7N2"/>
<dbReference type="GeneWiki" id="L1TD1"/>
<dbReference type="GenomeRNAi" id="54596"/>
<dbReference type="Pharos" id="Q5T7N2">
    <property type="development level" value="Tbio"/>
</dbReference>
<dbReference type="PRO" id="PR:Q5T7N2"/>
<dbReference type="Proteomes" id="UP000005640">
    <property type="component" value="Chromosome 1"/>
</dbReference>
<dbReference type="RNAct" id="Q5T7N2">
    <property type="molecule type" value="protein"/>
</dbReference>
<dbReference type="Bgee" id="ENSG00000240563">
    <property type="expression patterns" value="Expressed in primordial germ cell in gonad and 66 other cell types or tissues"/>
</dbReference>
<dbReference type="GO" id="GO:0043231">
    <property type="term" value="C:intracellular membrane-bounded organelle"/>
    <property type="evidence" value="ECO:0000314"/>
    <property type="project" value="HPA"/>
</dbReference>
<dbReference type="GO" id="GO:1990904">
    <property type="term" value="C:ribonucleoprotein complex"/>
    <property type="evidence" value="ECO:0000318"/>
    <property type="project" value="GO_Central"/>
</dbReference>
<dbReference type="GO" id="GO:0003727">
    <property type="term" value="F:single-stranded RNA binding"/>
    <property type="evidence" value="ECO:0000318"/>
    <property type="project" value="GO_Central"/>
</dbReference>
<dbReference type="GO" id="GO:0032197">
    <property type="term" value="P:retrotransposition"/>
    <property type="evidence" value="ECO:0000318"/>
    <property type="project" value="GO_Central"/>
</dbReference>
<dbReference type="FunFam" id="3.30.70.1820:FF:000002">
    <property type="entry name" value="LINE-1 retrotransposable element ORF1 protein"/>
    <property type="match status" value="1"/>
</dbReference>
<dbReference type="FunFam" id="3.30.250.20:FF:000002">
    <property type="entry name" value="LINE1 type transposase domain containing 1"/>
    <property type="match status" value="2"/>
</dbReference>
<dbReference type="Gene3D" id="3.30.250.20">
    <property type="entry name" value="L1 transposable element, C-terminal domain"/>
    <property type="match status" value="2"/>
</dbReference>
<dbReference type="Gene3D" id="3.30.70.1820">
    <property type="entry name" value="L1 transposable element, RRM domain"/>
    <property type="match status" value="1"/>
</dbReference>
<dbReference type="InterPro" id="IPR042566">
    <property type="entry name" value="L1_C"/>
</dbReference>
<dbReference type="InterPro" id="IPR035300">
    <property type="entry name" value="L1_dsRBD"/>
</dbReference>
<dbReference type="InterPro" id="IPR043636">
    <property type="entry name" value="L1_RRM_dom"/>
</dbReference>
<dbReference type="InterPro" id="IPR004244">
    <property type="entry name" value="Transposase_22"/>
</dbReference>
<dbReference type="PANTHER" id="PTHR11505">
    <property type="entry name" value="L1 TRANSPOSABLE ELEMENT-RELATED"/>
    <property type="match status" value="1"/>
</dbReference>
<dbReference type="Pfam" id="PF17490">
    <property type="entry name" value="Tnp_22_dsRBD"/>
    <property type="match status" value="2"/>
</dbReference>
<dbReference type="Pfam" id="PF02994">
    <property type="entry name" value="Transposase_22"/>
    <property type="match status" value="1"/>
</dbReference>
<evidence type="ECO:0000255" key="1"/>
<evidence type="ECO:0000256" key="2">
    <source>
        <dbReference type="SAM" id="MobiDB-lite"/>
    </source>
</evidence>
<evidence type="ECO:0000269" key="3">
    <source>
    </source>
</evidence>
<evidence type="ECO:0000269" key="4">
    <source>
    </source>
</evidence>
<evidence type="ECO:0000269" key="5">
    <source>
    </source>
</evidence>
<evidence type="ECO:0000269" key="6">
    <source ref="1"/>
</evidence>
<evidence type="ECO:0000305" key="7"/>
<evidence type="ECO:0007744" key="8">
    <source>
    </source>
</evidence>
<evidence type="ECO:0007829" key="9">
    <source>
        <dbReference type="PDB" id="2LR6"/>
    </source>
</evidence>
<evidence type="ECO:0007829" key="10">
    <source>
        <dbReference type="PDB" id="3SOO"/>
    </source>
</evidence>
<sequence>MSDVSTSVQSKFARLAKKKENITYMKREQLTETDKDIAPVLDLKCKDVSAIMNKFKVLMEIQDLMFEEMRETLKNDLKAVLGGKATIPEVKNSENSSSRTEFQQIINLALQKTGMVGKIEGENSKIGDDNENLTFKLEVNELSGKLDNTNEYNSNDGKKLPQGESRSYEVMGSMEETLCNIDDRDGNRNVHLEFTERESRKDGEDEFVKEMREERKFQKLKNKEEVLKASREEKVLMDEGAVLTLVADLSSATLDISKQWSNVFNILRENDFEPKFLCEVKLAFKCDGEIKTFSDLQSLRKFASQKSSVKELLKDVLPQKEEINQGGRKYGIQEKRDKTLIDSKHRAGEITSDGLSFLFLKEVKVAKPEEMKNLETQEEEFSELEELDEEASGMEDDEDTSGLEEEEEEPSGLEEEEEEEASGLEEDEASGLEEEEEQTSEQDSTFQGHTLVDAKHEVEITSDGMETTFIDSVEDSESEEEEEGKSSETGKVKTTSLTEKKASRRQKEIPFSYLVGDSGKKKLVKHQVVHKTQEEEETAVPTSQGTGTPCLTLCLASPSKSLEMSHDEHKKHSHTNLSISTGVTKLKKTEEKKHRTLHTEELTSKEADLTEETEENLRSSVINSIREIKEEIGNLKSSHSGVLEIENSVDDLSSRMDILEERIDSLEDQIEEFSKDTMQMTKQIISKERQRDIEERSRSCNIRLIGIPEKESYENRAEDIIKEIIDENFAELKKGSSLEIVSACRVPSKIDEKRLTPRHILVKFWNSSDKEKIIRASRERREITYQGTRIRLTADLSLDTLDARSKWSNVFKVLLEKGFNPRILYPAKMAFDFRGKTKVFLSIEEFRDYVLHMPTLRELLGNNIP</sequence>
<feature type="initiator methionine" description="Removed" evidence="8">
    <location>
        <position position="1"/>
    </location>
</feature>
<feature type="chain" id="PRO_0000307217" description="LINE-1 type transposase domain-containing protein 1">
    <location>
        <begin position="2"/>
        <end position="865"/>
    </location>
</feature>
<feature type="region of interest" description="Disordered" evidence="2">
    <location>
        <begin position="370"/>
        <end position="508"/>
    </location>
</feature>
<feature type="region of interest" description="Disordered" evidence="2">
    <location>
        <begin position="590"/>
        <end position="612"/>
    </location>
</feature>
<feature type="coiled-coil region" evidence="1">
    <location>
        <begin position="642"/>
        <end position="684"/>
    </location>
</feature>
<feature type="compositionally biased region" description="Acidic residues" evidence="2">
    <location>
        <begin position="376"/>
        <end position="440"/>
    </location>
</feature>
<feature type="compositionally biased region" description="Acidic residues" evidence="2">
    <location>
        <begin position="472"/>
        <end position="483"/>
    </location>
</feature>
<feature type="compositionally biased region" description="Basic and acidic residues" evidence="2">
    <location>
        <begin position="498"/>
        <end position="508"/>
    </location>
</feature>
<feature type="compositionally biased region" description="Basic and acidic residues" evidence="2">
    <location>
        <begin position="590"/>
        <end position="608"/>
    </location>
</feature>
<feature type="modified residue" description="N-acetylserine" evidence="8">
    <location>
        <position position="2"/>
    </location>
</feature>
<feature type="modified residue" description="Phosphoserine" evidence="8">
    <location>
        <position position="2"/>
    </location>
</feature>
<feature type="modified residue" description="Phosphothreonine" evidence="8">
    <location>
        <position position="149"/>
    </location>
</feature>
<feature type="modified residue" description="Phosphoserine" evidence="8">
    <location>
        <position position="154"/>
    </location>
</feature>
<feature type="modified residue" description="Phosphoserine" evidence="8">
    <location>
        <position position="472"/>
    </location>
</feature>
<feature type="modified residue" description="Phosphoserine" evidence="8">
    <location>
        <position position="476"/>
    </location>
</feature>
<feature type="modified residue" description="Phosphoserine" evidence="8">
    <location>
        <position position="478"/>
    </location>
</feature>
<feature type="modified residue" description="Phosphoserine" evidence="8">
    <location>
        <position position="518"/>
    </location>
</feature>
<feature type="modified residue" description="Phosphoserine" evidence="8">
    <location>
        <position position="561"/>
    </location>
</feature>
<feature type="modified residue" description="Phosphoserine" evidence="8">
    <location>
        <position position="573"/>
    </location>
</feature>
<feature type="modified residue" description="Phosphoserine" evidence="8">
    <location>
        <position position="640"/>
    </location>
</feature>
<feature type="modified residue" description="Phosphoserine" evidence="8">
    <location>
        <position position="648"/>
    </location>
</feature>
<feature type="modified residue" description="Phosphoserine" evidence="8">
    <location>
        <position position="665"/>
    </location>
</feature>
<feature type="sequence variant" id="VAR_035377" description="In dbSNP:rs7552335.">
    <original>R</original>
    <variation>S</variation>
    <location>
        <position position="27"/>
    </location>
</feature>
<feature type="sequence variant" id="VAR_035378" description="In dbSNP:rs7542665." evidence="3 4 5 6">
    <original>V</original>
    <variation>A</variation>
    <location>
        <position position="246"/>
    </location>
</feature>
<feature type="sequence variant" id="VAR_035379" description="In dbSNP:rs7533274." evidence="3 4 5 6">
    <original>V</original>
    <variation>M</variation>
    <location>
        <position position="309"/>
    </location>
</feature>
<feature type="sequence variant" id="VAR_035380" description="In dbSNP:rs2457828." evidence="4 5 6">
    <original>K</original>
    <variation>N</variation>
    <location>
        <position position="329"/>
    </location>
</feature>
<feature type="sequence variant" id="VAR_035381" description="In dbSNP:rs11207933.">
    <original>P</original>
    <variation>T</variation>
    <location>
        <position position="549"/>
    </location>
</feature>
<feature type="sequence variant" id="VAR_035382" description="In dbSNP:rs2886644.">
    <original>T</original>
    <variation>I</variation>
    <location>
        <position position="613"/>
    </location>
</feature>
<feature type="sequence variant" id="VAR_051094" description="In dbSNP:rs11207934.">
    <original>L</original>
    <variation>V</variation>
    <location>
        <position position="860"/>
    </location>
</feature>
<feature type="sequence conflict" description="In Ref. 2; BAA92011." evidence="7" ref="2">
    <original>T</original>
    <variation>I</variation>
    <location>
        <position position="548"/>
    </location>
</feature>
<feature type="turn" evidence="9">
    <location>
        <begin position="248"/>
        <end position="250"/>
    </location>
</feature>
<feature type="helix" evidence="10">
    <location>
        <begin position="258"/>
        <end position="269"/>
    </location>
</feature>
<feature type="strand" evidence="10">
    <location>
        <begin position="282"/>
        <end position="285"/>
    </location>
</feature>
<feature type="strand" evidence="10">
    <location>
        <begin position="287"/>
        <end position="295"/>
    </location>
</feature>
<feature type="helix" evidence="10">
    <location>
        <begin position="296"/>
        <end position="304"/>
    </location>
</feature>
<feature type="helix" evidence="10">
    <location>
        <begin position="307"/>
        <end position="310"/>
    </location>
</feature>
<feature type="turn" evidence="10">
    <location>
        <begin position="314"/>
        <end position="316"/>
    </location>
</feature>
<gene>
    <name type="primary">L1TD1</name>
    <name type="synonym">ECAT11</name>
</gene>
<accession>Q5T7N2</accession>
<accession>Q8NDA1</accession>
<accession>Q9NUV8</accession>
<accession>Q9NV78</accession>
<organism>
    <name type="scientific">Homo sapiens</name>
    <name type="common">Human</name>
    <dbReference type="NCBI Taxonomy" id="9606"/>
    <lineage>
        <taxon>Eukaryota</taxon>
        <taxon>Metazoa</taxon>
        <taxon>Chordata</taxon>
        <taxon>Craniata</taxon>
        <taxon>Vertebrata</taxon>
        <taxon>Euteleostomi</taxon>
        <taxon>Mammalia</taxon>
        <taxon>Eutheria</taxon>
        <taxon>Euarchontoglires</taxon>
        <taxon>Primates</taxon>
        <taxon>Haplorrhini</taxon>
        <taxon>Catarrhini</taxon>
        <taxon>Hominidae</taxon>
        <taxon>Homo</taxon>
    </lineage>
</organism>
<protein>
    <recommendedName>
        <fullName>LINE-1 type transposase domain-containing protein 1</fullName>
    </recommendedName>
    <alternativeName>
        <fullName>ES cell-associated protein 11</fullName>
    </alternativeName>
</protein>
<reference key="1">
    <citation type="submission" date="2005-04" db="EMBL/GenBank/DDBJ databases">
        <authorList>
            <person name="Yamanaka S."/>
        </authorList>
    </citation>
    <scope>NUCLEOTIDE SEQUENCE [MRNA]</scope>
    <scope>VARIANTS ALA-246; MET-309 AND ASN-329</scope>
</reference>
<reference key="2">
    <citation type="journal article" date="2004" name="Nat. Genet.">
        <title>Complete sequencing and characterization of 21,243 full-length human cDNAs.</title>
        <authorList>
            <person name="Ota T."/>
            <person name="Suzuki Y."/>
            <person name="Nishikawa T."/>
            <person name="Otsuki T."/>
            <person name="Sugiyama T."/>
            <person name="Irie R."/>
            <person name="Wakamatsu A."/>
            <person name="Hayashi K."/>
            <person name="Sato H."/>
            <person name="Nagai K."/>
            <person name="Kimura K."/>
            <person name="Makita H."/>
            <person name="Sekine M."/>
            <person name="Obayashi M."/>
            <person name="Nishi T."/>
            <person name="Shibahara T."/>
            <person name="Tanaka T."/>
            <person name="Ishii S."/>
            <person name="Yamamoto J."/>
            <person name="Saito K."/>
            <person name="Kawai Y."/>
            <person name="Isono Y."/>
            <person name="Nakamura Y."/>
            <person name="Nagahari K."/>
            <person name="Murakami K."/>
            <person name="Yasuda T."/>
            <person name="Iwayanagi T."/>
            <person name="Wagatsuma M."/>
            <person name="Shiratori A."/>
            <person name="Sudo H."/>
            <person name="Hosoiri T."/>
            <person name="Kaku Y."/>
            <person name="Kodaira H."/>
            <person name="Kondo H."/>
            <person name="Sugawara M."/>
            <person name="Takahashi M."/>
            <person name="Kanda K."/>
            <person name="Yokoi T."/>
            <person name="Furuya T."/>
            <person name="Kikkawa E."/>
            <person name="Omura Y."/>
            <person name="Abe K."/>
            <person name="Kamihara K."/>
            <person name="Katsuta N."/>
            <person name="Sato K."/>
            <person name="Tanikawa M."/>
            <person name="Yamazaki M."/>
            <person name="Ninomiya K."/>
            <person name="Ishibashi T."/>
            <person name="Yamashita H."/>
            <person name="Murakawa K."/>
            <person name="Fujimori K."/>
            <person name="Tanai H."/>
            <person name="Kimata M."/>
            <person name="Watanabe M."/>
            <person name="Hiraoka S."/>
            <person name="Chiba Y."/>
            <person name="Ishida S."/>
            <person name="Ono Y."/>
            <person name="Takiguchi S."/>
            <person name="Watanabe S."/>
            <person name="Yosida M."/>
            <person name="Hotuta T."/>
            <person name="Kusano J."/>
            <person name="Kanehori K."/>
            <person name="Takahashi-Fujii A."/>
            <person name="Hara H."/>
            <person name="Tanase T.-O."/>
            <person name="Nomura Y."/>
            <person name="Togiya S."/>
            <person name="Komai F."/>
            <person name="Hara R."/>
            <person name="Takeuchi K."/>
            <person name="Arita M."/>
            <person name="Imose N."/>
            <person name="Musashino K."/>
            <person name="Yuuki H."/>
            <person name="Oshima A."/>
            <person name="Sasaki N."/>
            <person name="Aotsuka S."/>
            <person name="Yoshikawa Y."/>
            <person name="Matsunawa H."/>
            <person name="Ichihara T."/>
            <person name="Shiohata N."/>
            <person name="Sano S."/>
            <person name="Moriya S."/>
            <person name="Momiyama H."/>
            <person name="Satoh N."/>
            <person name="Takami S."/>
            <person name="Terashima Y."/>
            <person name="Suzuki O."/>
            <person name="Nakagawa S."/>
            <person name="Senoh A."/>
            <person name="Mizoguchi H."/>
            <person name="Goto Y."/>
            <person name="Shimizu F."/>
            <person name="Wakebe H."/>
            <person name="Hishigaki H."/>
            <person name="Watanabe T."/>
            <person name="Sugiyama A."/>
            <person name="Takemoto M."/>
            <person name="Kawakami B."/>
            <person name="Yamazaki M."/>
            <person name="Watanabe K."/>
            <person name="Kumagai A."/>
            <person name="Itakura S."/>
            <person name="Fukuzumi Y."/>
            <person name="Fujimori Y."/>
            <person name="Komiyama M."/>
            <person name="Tashiro H."/>
            <person name="Tanigami A."/>
            <person name="Fujiwara T."/>
            <person name="Ono T."/>
            <person name="Yamada K."/>
            <person name="Fujii Y."/>
            <person name="Ozaki K."/>
            <person name="Hirao M."/>
            <person name="Ohmori Y."/>
            <person name="Kawabata A."/>
            <person name="Hikiji T."/>
            <person name="Kobatake N."/>
            <person name="Inagaki H."/>
            <person name="Ikema Y."/>
            <person name="Okamoto S."/>
            <person name="Okitani R."/>
            <person name="Kawakami T."/>
            <person name="Noguchi S."/>
            <person name="Itoh T."/>
            <person name="Shigeta K."/>
            <person name="Senba T."/>
            <person name="Matsumura K."/>
            <person name="Nakajima Y."/>
            <person name="Mizuno T."/>
            <person name="Morinaga M."/>
            <person name="Sasaki M."/>
            <person name="Togashi T."/>
            <person name="Oyama M."/>
            <person name="Hata H."/>
            <person name="Watanabe M."/>
            <person name="Komatsu T."/>
            <person name="Mizushima-Sugano J."/>
            <person name="Satoh T."/>
            <person name="Shirai Y."/>
            <person name="Takahashi Y."/>
            <person name="Nakagawa K."/>
            <person name="Okumura K."/>
            <person name="Nagase T."/>
            <person name="Nomura N."/>
            <person name="Kikuchi H."/>
            <person name="Masuho Y."/>
            <person name="Yamashita R."/>
            <person name="Nakai K."/>
            <person name="Yada T."/>
            <person name="Nakamura Y."/>
            <person name="Ohara O."/>
            <person name="Isogai T."/>
            <person name="Sugano S."/>
        </authorList>
    </citation>
    <scope>NUCLEOTIDE SEQUENCE [LARGE SCALE MRNA]</scope>
    <scope>VARIANTS ALA-246 AND MET-309</scope>
    <source>
        <tissue>Placenta</tissue>
    </source>
</reference>
<reference key="3">
    <citation type="journal article" date="2007" name="BMC Genomics">
        <title>The full-ORF clone resource of the German cDNA consortium.</title>
        <authorList>
            <person name="Bechtel S."/>
            <person name="Rosenfelder H."/>
            <person name="Duda A."/>
            <person name="Schmidt C.P."/>
            <person name="Ernst U."/>
            <person name="Wellenreuther R."/>
            <person name="Mehrle A."/>
            <person name="Schuster C."/>
            <person name="Bahr A."/>
            <person name="Bloecker H."/>
            <person name="Heubner D."/>
            <person name="Hoerlein A."/>
            <person name="Michel G."/>
            <person name="Wedler H."/>
            <person name="Koehrer K."/>
            <person name="Ottenwaelder B."/>
            <person name="Poustka A."/>
            <person name="Wiemann S."/>
            <person name="Schupp I."/>
        </authorList>
    </citation>
    <scope>NUCLEOTIDE SEQUENCE [LARGE SCALE MRNA]</scope>
    <scope>VARIANTS ALA-246; MET-309 AND ASN-329</scope>
    <source>
        <tissue>Testis</tissue>
    </source>
</reference>
<reference key="4">
    <citation type="journal article" date="2006" name="Nature">
        <title>The DNA sequence and biological annotation of human chromosome 1.</title>
        <authorList>
            <person name="Gregory S.G."/>
            <person name="Barlow K.F."/>
            <person name="McLay K.E."/>
            <person name="Kaul R."/>
            <person name="Swarbreck D."/>
            <person name="Dunham A."/>
            <person name="Scott C.E."/>
            <person name="Howe K.L."/>
            <person name="Woodfine K."/>
            <person name="Spencer C.C.A."/>
            <person name="Jones M.C."/>
            <person name="Gillson C."/>
            <person name="Searle S."/>
            <person name="Zhou Y."/>
            <person name="Kokocinski F."/>
            <person name="McDonald L."/>
            <person name="Evans R."/>
            <person name="Phillips K."/>
            <person name="Atkinson A."/>
            <person name="Cooper R."/>
            <person name="Jones C."/>
            <person name="Hall R.E."/>
            <person name="Andrews T.D."/>
            <person name="Lloyd C."/>
            <person name="Ainscough R."/>
            <person name="Almeida J.P."/>
            <person name="Ambrose K.D."/>
            <person name="Anderson F."/>
            <person name="Andrew R.W."/>
            <person name="Ashwell R.I.S."/>
            <person name="Aubin K."/>
            <person name="Babbage A.K."/>
            <person name="Bagguley C.L."/>
            <person name="Bailey J."/>
            <person name="Beasley H."/>
            <person name="Bethel G."/>
            <person name="Bird C.P."/>
            <person name="Bray-Allen S."/>
            <person name="Brown J.Y."/>
            <person name="Brown A.J."/>
            <person name="Buckley D."/>
            <person name="Burton J."/>
            <person name="Bye J."/>
            <person name="Carder C."/>
            <person name="Chapman J.C."/>
            <person name="Clark S.Y."/>
            <person name="Clarke G."/>
            <person name="Clee C."/>
            <person name="Cobley V."/>
            <person name="Collier R.E."/>
            <person name="Corby N."/>
            <person name="Coville G.J."/>
            <person name="Davies J."/>
            <person name="Deadman R."/>
            <person name="Dunn M."/>
            <person name="Earthrowl M."/>
            <person name="Ellington A.G."/>
            <person name="Errington H."/>
            <person name="Frankish A."/>
            <person name="Frankland J."/>
            <person name="French L."/>
            <person name="Garner P."/>
            <person name="Garnett J."/>
            <person name="Gay L."/>
            <person name="Ghori M.R.J."/>
            <person name="Gibson R."/>
            <person name="Gilby L.M."/>
            <person name="Gillett W."/>
            <person name="Glithero R.J."/>
            <person name="Grafham D.V."/>
            <person name="Griffiths C."/>
            <person name="Griffiths-Jones S."/>
            <person name="Grocock R."/>
            <person name="Hammond S."/>
            <person name="Harrison E.S.I."/>
            <person name="Hart E."/>
            <person name="Haugen E."/>
            <person name="Heath P.D."/>
            <person name="Holmes S."/>
            <person name="Holt K."/>
            <person name="Howden P.J."/>
            <person name="Hunt A.R."/>
            <person name="Hunt S.E."/>
            <person name="Hunter G."/>
            <person name="Isherwood J."/>
            <person name="James R."/>
            <person name="Johnson C."/>
            <person name="Johnson D."/>
            <person name="Joy A."/>
            <person name="Kay M."/>
            <person name="Kershaw J.K."/>
            <person name="Kibukawa M."/>
            <person name="Kimberley A.M."/>
            <person name="King A."/>
            <person name="Knights A.J."/>
            <person name="Lad H."/>
            <person name="Laird G."/>
            <person name="Lawlor S."/>
            <person name="Leongamornlert D.A."/>
            <person name="Lloyd D.M."/>
            <person name="Loveland J."/>
            <person name="Lovell J."/>
            <person name="Lush M.J."/>
            <person name="Lyne R."/>
            <person name="Martin S."/>
            <person name="Mashreghi-Mohammadi M."/>
            <person name="Matthews L."/>
            <person name="Matthews N.S.W."/>
            <person name="McLaren S."/>
            <person name="Milne S."/>
            <person name="Mistry S."/>
            <person name="Moore M.J.F."/>
            <person name="Nickerson T."/>
            <person name="O'Dell C.N."/>
            <person name="Oliver K."/>
            <person name="Palmeiri A."/>
            <person name="Palmer S.A."/>
            <person name="Parker A."/>
            <person name="Patel D."/>
            <person name="Pearce A.V."/>
            <person name="Peck A.I."/>
            <person name="Pelan S."/>
            <person name="Phelps K."/>
            <person name="Phillimore B.J."/>
            <person name="Plumb R."/>
            <person name="Rajan J."/>
            <person name="Raymond C."/>
            <person name="Rouse G."/>
            <person name="Saenphimmachak C."/>
            <person name="Sehra H.K."/>
            <person name="Sheridan E."/>
            <person name="Shownkeen R."/>
            <person name="Sims S."/>
            <person name="Skuce C.D."/>
            <person name="Smith M."/>
            <person name="Steward C."/>
            <person name="Subramanian S."/>
            <person name="Sycamore N."/>
            <person name="Tracey A."/>
            <person name="Tromans A."/>
            <person name="Van Helmond Z."/>
            <person name="Wall M."/>
            <person name="Wallis J.M."/>
            <person name="White S."/>
            <person name="Whitehead S.L."/>
            <person name="Wilkinson J.E."/>
            <person name="Willey D.L."/>
            <person name="Williams H."/>
            <person name="Wilming L."/>
            <person name="Wray P.W."/>
            <person name="Wu Z."/>
            <person name="Coulson A."/>
            <person name="Vaudin M."/>
            <person name="Sulston J.E."/>
            <person name="Durbin R.M."/>
            <person name="Hubbard T."/>
            <person name="Wooster R."/>
            <person name="Dunham I."/>
            <person name="Carter N.P."/>
            <person name="McVean G."/>
            <person name="Ross M.T."/>
            <person name="Harrow J."/>
            <person name="Olson M.V."/>
            <person name="Beck S."/>
            <person name="Rogers J."/>
            <person name="Bentley D.R."/>
        </authorList>
    </citation>
    <scope>NUCLEOTIDE SEQUENCE [LARGE SCALE GENOMIC DNA]</scope>
</reference>
<reference key="5">
    <citation type="journal article" date="2004" name="Genome Res.">
        <title>The status, quality, and expansion of the NIH full-length cDNA project: the Mammalian Gene Collection (MGC).</title>
        <authorList>
            <consortium name="The MGC Project Team"/>
        </authorList>
    </citation>
    <scope>NUCLEOTIDE SEQUENCE [LARGE SCALE MRNA]</scope>
    <scope>VARIANTS ALA-246; MET-309 AND ASN-329</scope>
</reference>
<reference key="6">
    <citation type="journal article" date="2011" name="Sci. Signal.">
        <title>System-wide temporal characterization of the proteome and phosphoproteome of human embryonic stem cell differentiation.</title>
        <authorList>
            <person name="Rigbolt K.T."/>
            <person name="Prokhorova T.A."/>
            <person name="Akimov V."/>
            <person name="Henningsen J."/>
            <person name="Johansen P.T."/>
            <person name="Kratchmarova I."/>
            <person name="Kassem M."/>
            <person name="Mann M."/>
            <person name="Olsen J.V."/>
            <person name="Blagoev B."/>
        </authorList>
    </citation>
    <scope>ACETYLATION [LARGE SCALE ANALYSIS] AT SER-2</scope>
    <scope>PHOSPHORYLATION [LARGE SCALE ANALYSIS] AT SER-2; THR-149; SER-154; SER-472; SER-476; SER-478; SER-518; SER-561; SER-573; SER-640; SER-648 AND SER-665</scope>
    <scope>CLEAVAGE OF INITIATOR METHIONINE [LARGE SCALE ANALYSIS]</scope>
    <scope>IDENTIFICATION BY MASS SPECTROMETRY [LARGE SCALE ANALYSIS]</scope>
</reference>
<proteinExistence type="evidence at protein level"/>
<keyword id="KW-0002">3D-structure</keyword>
<keyword id="KW-0007">Acetylation</keyword>
<keyword id="KW-0175">Coiled coil</keyword>
<keyword id="KW-0597">Phosphoprotein</keyword>
<keyword id="KW-1267">Proteomics identification</keyword>
<keyword id="KW-1185">Reference proteome</keyword>
<comment type="interaction">
    <interactant intactId="EBI-7216220">
        <id>Q5T7N2</id>
    </interactant>
    <interactant intactId="EBI-299649">
        <id>P22626</id>
        <label>HNRNPA2B1</label>
    </interactant>
    <organismsDiffer>false</organismsDiffer>
    <experiments>2</experiments>
</comment>
<comment type="similarity">
    <text evidence="7">Belongs to the transposase 22 family.</text>
</comment>
<comment type="sequence caution" evidence="7">
    <conflict type="erroneous initiation">
        <sequence resource="EMBL-CDS" id="BAA91878"/>
    </conflict>
    <text>Truncated N-terminus.</text>
</comment>
<comment type="sequence caution" evidence="7">
    <conflict type="erroneous termination">
        <sequence resource="EMBL-CDS" id="BAA91878"/>
    </conflict>
    <text>Truncated C-terminus.</text>
</comment>
<name>LITD1_HUMAN</name>